<organism>
    <name type="scientific">Xylella fastidiosa (strain 9a5c)</name>
    <dbReference type="NCBI Taxonomy" id="160492"/>
    <lineage>
        <taxon>Bacteria</taxon>
        <taxon>Pseudomonadati</taxon>
        <taxon>Pseudomonadota</taxon>
        <taxon>Gammaproteobacteria</taxon>
        <taxon>Lysobacterales</taxon>
        <taxon>Lysobacteraceae</taxon>
        <taxon>Xylella</taxon>
    </lineage>
</organism>
<protein>
    <recommendedName>
        <fullName evidence="1">tRNA-specific 2-thiouridylase MnmA</fullName>
        <ecNumber evidence="1">2.8.1.13</ecNumber>
    </recommendedName>
</protein>
<keyword id="KW-0067">ATP-binding</keyword>
<keyword id="KW-0963">Cytoplasm</keyword>
<keyword id="KW-1015">Disulfide bond</keyword>
<keyword id="KW-0547">Nucleotide-binding</keyword>
<keyword id="KW-0694">RNA-binding</keyword>
<keyword id="KW-0808">Transferase</keyword>
<keyword id="KW-0819">tRNA processing</keyword>
<keyword id="KW-0820">tRNA-binding</keyword>
<gene>
    <name evidence="1" type="primary">mnmA</name>
    <name type="synonym">trmU</name>
    <name type="ordered locus">XF_1440</name>
</gene>
<dbReference type="EC" id="2.8.1.13" evidence="1"/>
<dbReference type="EMBL" id="AE003849">
    <property type="protein sequence ID" value="AAF84249.1"/>
    <property type="molecule type" value="Genomic_DNA"/>
</dbReference>
<dbReference type="PIR" id="F82680">
    <property type="entry name" value="F82680"/>
</dbReference>
<dbReference type="RefSeq" id="WP_010893941.1">
    <property type="nucleotide sequence ID" value="NC_002488.3"/>
</dbReference>
<dbReference type="SMR" id="Q9PDD9"/>
<dbReference type="STRING" id="160492.XF_1440"/>
<dbReference type="KEGG" id="xfa:XF_1440"/>
<dbReference type="eggNOG" id="COG0482">
    <property type="taxonomic scope" value="Bacteria"/>
</dbReference>
<dbReference type="HOGENOM" id="CLU_035188_1_0_6"/>
<dbReference type="Proteomes" id="UP000000812">
    <property type="component" value="Chromosome"/>
</dbReference>
<dbReference type="GO" id="GO:0005737">
    <property type="term" value="C:cytoplasm"/>
    <property type="evidence" value="ECO:0007669"/>
    <property type="project" value="UniProtKB-SubCell"/>
</dbReference>
<dbReference type="GO" id="GO:0005524">
    <property type="term" value="F:ATP binding"/>
    <property type="evidence" value="ECO:0007669"/>
    <property type="project" value="UniProtKB-KW"/>
</dbReference>
<dbReference type="GO" id="GO:0000049">
    <property type="term" value="F:tRNA binding"/>
    <property type="evidence" value="ECO:0007669"/>
    <property type="project" value="UniProtKB-KW"/>
</dbReference>
<dbReference type="GO" id="GO:0103016">
    <property type="term" value="F:tRNA-uridine 2-sulfurtransferase activity"/>
    <property type="evidence" value="ECO:0007669"/>
    <property type="project" value="UniProtKB-EC"/>
</dbReference>
<dbReference type="GO" id="GO:0002143">
    <property type="term" value="P:tRNA wobble position uridine thiolation"/>
    <property type="evidence" value="ECO:0007669"/>
    <property type="project" value="TreeGrafter"/>
</dbReference>
<dbReference type="CDD" id="cd01998">
    <property type="entry name" value="MnmA_TRMU-like"/>
    <property type="match status" value="1"/>
</dbReference>
<dbReference type="FunFam" id="2.30.30.280:FF:000001">
    <property type="entry name" value="tRNA-specific 2-thiouridylase MnmA"/>
    <property type="match status" value="1"/>
</dbReference>
<dbReference type="FunFam" id="2.40.30.10:FF:000023">
    <property type="entry name" value="tRNA-specific 2-thiouridylase MnmA"/>
    <property type="match status" value="1"/>
</dbReference>
<dbReference type="FunFam" id="3.40.50.620:FF:000004">
    <property type="entry name" value="tRNA-specific 2-thiouridylase MnmA"/>
    <property type="match status" value="1"/>
</dbReference>
<dbReference type="Gene3D" id="2.30.30.280">
    <property type="entry name" value="Adenine nucleotide alpha hydrolases-like domains"/>
    <property type="match status" value="1"/>
</dbReference>
<dbReference type="Gene3D" id="3.40.50.620">
    <property type="entry name" value="HUPs"/>
    <property type="match status" value="1"/>
</dbReference>
<dbReference type="Gene3D" id="2.40.30.10">
    <property type="entry name" value="Translation factors"/>
    <property type="match status" value="1"/>
</dbReference>
<dbReference type="HAMAP" id="MF_00144">
    <property type="entry name" value="tRNA_thiouridyl_MnmA"/>
    <property type="match status" value="1"/>
</dbReference>
<dbReference type="InterPro" id="IPR004506">
    <property type="entry name" value="MnmA-like"/>
</dbReference>
<dbReference type="InterPro" id="IPR046885">
    <property type="entry name" value="MnmA-like_C"/>
</dbReference>
<dbReference type="InterPro" id="IPR046884">
    <property type="entry name" value="MnmA-like_central"/>
</dbReference>
<dbReference type="InterPro" id="IPR023382">
    <property type="entry name" value="MnmA-like_central_sf"/>
</dbReference>
<dbReference type="InterPro" id="IPR014729">
    <property type="entry name" value="Rossmann-like_a/b/a_fold"/>
</dbReference>
<dbReference type="NCBIfam" id="NF001138">
    <property type="entry name" value="PRK00143.1"/>
    <property type="match status" value="1"/>
</dbReference>
<dbReference type="NCBIfam" id="TIGR00420">
    <property type="entry name" value="trmU"/>
    <property type="match status" value="1"/>
</dbReference>
<dbReference type="PANTHER" id="PTHR11933:SF5">
    <property type="entry name" value="MITOCHONDRIAL TRNA-SPECIFIC 2-THIOURIDYLASE 1"/>
    <property type="match status" value="1"/>
</dbReference>
<dbReference type="PANTHER" id="PTHR11933">
    <property type="entry name" value="TRNA 5-METHYLAMINOMETHYL-2-THIOURIDYLATE -METHYLTRANSFERASE"/>
    <property type="match status" value="1"/>
</dbReference>
<dbReference type="Pfam" id="PF03054">
    <property type="entry name" value="tRNA_Me_trans"/>
    <property type="match status" value="1"/>
</dbReference>
<dbReference type="Pfam" id="PF20258">
    <property type="entry name" value="tRNA_Me_trans_C"/>
    <property type="match status" value="1"/>
</dbReference>
<dbReference type="Pfam" id="PF20259">
    <property type="entry name" value="tRNA_Me_trans_M"/>
    <property type="match status" value="1"/>
</dbReference>
<dbReference type="SUPFAM" id="SSF52402">
    <property type="entry name" value="Adenine nucleotide alpha hydrolases-like"/>
    <property type="match status" value="1"/>
</dbReference>
<evidence type="ECO:0000255" key="1">
    <source>
        <dbReference type="HAMAP-Rule" id="MF_00144"/>
    </source>
</evidence>
<reference key="1">
    <citation type="journal article" date="2000" name="Nature">
        <title>The genome sequence of the plant pathogen Xylella fastidiosa.</title>
        <authorList>
            <person name="Simpson A.J.G."/>
            <person name="Reinach F.C."/>
            <person name="Arruda P."/>
            <person name="Abreu F.A."/>
            <person name="Acencio M."/>
            <person name="Alvarenga R."/>
            <person name="Alves L.M.C."/>
            <person name="Araya J.E."/>
            <person name="Baia G.S."/>
            <person name="Baptista C.S."/>
            <person name="Barros M.H."/>
            <person name="Bonaccorsi E.D."/>
            <person name="Bordin S."/>
            <person name="Bove J.M."/>
            <person name="Briones M.R.S."/>
            <person name="Bueno M.R.P."/>
            <person name="Camargo A.A."/>
            <person name="Camargo L.E.A."/>
            <person name="Carraro D.M."/>
            <person name="Carrer H."/>
            <person name="Colauto N.B."/>
            <person name="Colombo C."/>
            <person name="Costa F.F."/>
            <person name="Costa M.C.R."/>
            <person name="Costa-Neto C.M."/>
            <person name="Coutinho L.L."/>
            <person name="Cristofani M."/>
            <person name="Dias-Neto E."/>
            <person name="Docena C."/>
            <person name="El-Dorry H."/>
            <person name="Facincani A.P."/>
            <person name="Ferreira A.J.S."/>
            <person name="Ferreira V.C.A."/>
            <person name="Ferro J.A."/>
            <person name="Fraga J.S."/>
            <person name="Franca S.C."/>
            <person name="Franco M.C."/>
            <person name="Frohme M."/>
            <person name="Furlan L.R."/>
            <person name="Garnier M."/>
            <person name="Goldman G.H."/>
            <person name="Goldman M.H.S."/>
            <person name="Gomes S.L."/>
            <person name="Gruber A."/>
            <person name="Ho P.L."/>
            <person name="Hoheisel J.D."/>
            <person name="Junqueira M.L."/>
            <person name="Kemper E.L."/>
            <person name="Kitajima J.P."/>
            <person name="Krieger J.E."/>
            <person name="Kuramae E.E."/>
            <person name="Laigret F."/>
            <person name="Lambais M.R."/>
            <person name="Leite L.C.C."/>
            <person name="Lemos E.G.M."/>
            <person name="Lemos M.V.F."/>
            <person name="Lopes S.A."/>
            <person name="Lopes C.R."/>
            <person name="Machado J.A."/>
            <person name="Machado M.A."/>
            <person name="Madeira A.M.B.N."/>
            <person name="Madeira H.M.F."/>
            <person name="Marino C.L."/>
            <person name="Marques M.V."/>
            <person name="Martins E.A.L."/>
            <person name="Martins E.M.F."/>
            <person name="Matsukuma A.Y."/>
            <person name="Menck C.F.M."/>
            <person name="Miracca E.C."/>
            <person name="Miyaki C.Y."/>
            <person name="Monteiro-Vitorello C.B."/>
            <person name="Moon D.H."/>
            <person name="Nagai M.A."/>
            <person name="Nascimento A.L.T.O."/>
            <person name="Netto L.E.S."/>
            <person name="Nhani A. Jr."/>
            <person name="Nobrega F.G."/>
            <person name="Nunes L.R."/>
            <person name="Oliveira M.A."/>
            <person name="de Oliveira M.C."/>
            <person name="de Oliveira R.C."/>
            <person name="Palmieri D.A."/>
            <person name="Paris A."/>
            <person name="Peixoto B.R."/>
            <person name="Pereira G.A.G."/>
            <person name="Pereira H.A. Jr."/>
            <person name="Pesquero J.B."/>
            <person name="Quaggio R.B."/>
            <person name="Roberto P.G."/>
            <person name="Rodrigues V."/>
            <person name="de Rosa A.J.M."/>
            <person name="de Rosa V.E. Jr."/>
            <person name="de Sa R.G."/>
            <person name="Santelli R.V."/>
            <person name="Sawasaki H.E."/>
            <person name="da Silva A.C.R."/>
            <person name="da Silva A.M."/>
            <person name="da Silva F.R."/>
            <person name="Silva W.A. Jr."/>
            <person name="da Silveira J.F."/>
            <person name="Silvestri M.L.Z."/>
            <person name="Siqueira W.J."/>
            <person name="de Souza A.A."/>
            <person name="de Souza A.P."/>
            <person name="Terenzi M.F."/>
            <person name="Truffi D."/>
            <person name="Tsai S.M."/>
            <person name="Tsuhako M.H."/>
            <person name="Vallada H."/>
            <person name="Van Sluys M.A."/>
            <person name="Verjovski-Almeida S."/>
            <person name="Vettore A.L."/>
            <person name="Zago M.A."/>
            <person name="Zatz M."/>
            <person name="Meidanis J."/>
            <person name="Setubal J.C."/>
        </authorList>
    </citation>
    <scope>NUCLEOTIDE SEQUENCE [LARGE SCALE GENOMIC DNA]</scope>
    <source>
        <strain>9a5c</strain>
    </source>
</reference>
<accession>Q9PDD9</accession>
<proteinExistence type="inferred from homology"/>
<feature type="chain" id="PRO_0000121705" description="tRNA-specific 2-thiouridylase MnmA">
    <location>
        <begin position="1"/>
        <end position="379"/>
    </location>
</feature>
<feature type="region of interest" description="Interaction with target base in tRNA" evidence="1">
    <location>
        <begin position="94"/>
        <end position="96"/>
    </location>
</feature>
<feature type="region of interest" description="Interaction with tRNA" evidence="1">
    <location>
        <begin position="145"/>
        <end position="147"/>
    </location>
</feature>
<feature type="region of interest" description="Interaction with tRNA" evidence="1">
    <location>
        <begin position="307"/>
        <end position="308"/>
    </location>
</feature>
<feature type="active site" description="Nucleophile" evidence="1">
    <location>
        <position position="99"/>
    </location>
</feature>
<feature type="active site" description="Cysteine persulfide intermediate" evidence="1">
    <location>
        <position position="195"/>
    </location>
</feature>
<feature type="binding site" evidence="1">
    <location>
        <begin position="9"/>
        <end position="16"/>
    </location>
    <ligand>
        <name>ATP</name>
        <dbReference type="ChEBI" id="CHEBI:30616"/>
    </ligand>
</feature>
<feature type="binding site" evidence="1">
    <location>
        <position position="35"/>
    </location>
    <ligand>
        <name>ATP</name>
        <dbReference type="ChEBI" id="CHEBI:30616"/>
    </ligand>
</feature>
<feature type="binding site" evidence="1">
    <location>
        <position position="123"/>
    </location>
    <ligand>
        <name>ATP</name>
        <dbReference type="ChEBI" id="CHEBI:30616"/>
    </ligand>
</feature>
<feature type="site" description="Interaction with tRNA" evidence="1">
    <location>
        <position position="124"/>
    </location>
</feature>
<feature type="site" description="Interaction with tRNA" evidence="1">
    <location>
        <position position="340"/>
    </location>
</feature>
<feature type="disulfide bond" description="Alternate" evidence="1">
    <location>
        <begin position="99"/>
        <end position="195"/>
    </location>
</feature>
<comment type="function">
    <text evidence="1">Catalyzes the 2-thiolation of uridine at the wobble position (U34) of tRNA, leading to the formation of s(2)U34.</text>
</comment>
<comment type="catalytic activity">
    <reaction evidence="1">
        <text>S-sulfanyl-L-cysteinyl-[protein] + uridine(34) in tRNA + AH2 + ATP = 2-thiouridine(34) in tRNA + L-cysteinyl-[protein] + A + AMP + diphosphate + H(+)</text>
        <dbReference type="Rhea" id="RHEA:47032"/>
        <dbReference type="Rhea" id="RHEA-COMP:10131"/>
        <dbReference type="Rhea" id="RHEA-COMP:11726"/>
        <dbReference type="Rhea" id="RHEA-COMP:11727"/>
        <dbReference type="Rhea" id="RHEA-COMP:11728"/>
        <dbReference type="ChEBI" id="CHEBI:13193"/>
        <dbReference type="ChEBI" id="CHEBI:15378"/>
        <dbReference type="ChEBI" id="CHEBI:17499"/>
        <dbReference type="ChEBI" id="CHEBI:29950"/>
        <dbReference type="ChEBI" id="CHEBI:30616"/>
        <dbReference type="ChEBI" id="CHEBI:33019"/>
        <dbReference type="ChEBI" id="CHEBI:61963"/>
        <dbReference type="ChEBI" id="CHEBI:65315"/>
        <dbReference type="ChEBI" id="CHEBI:87170"/>
        <dbReference type="ChEBI" id="CHEBI:456215"/>
        <dbReference type="EC" id="2.8.1.13"/>
    </reaction>
</comment>
<comment type="subcellular location">
    <subcellularLocation>
        <location evidence="1">Cytoplasm</location>
    </subcellularLocation>
</comment>
<comment type="similarity">
    <text evidence="1">Belongs to the MnmA/TRMU family.</text>
</comment>
<sequence length="379" mass="42975">MNTPRIIVAMSGGVDSSVAAWRLNSQRETIAGLFMRNWTDDGNGQCHAEEDRRDAVAVCGILGIAFHFRDFSHEYWQEVFTHFLAEYANGRTPNPDVLCNREIKFKHFLETARELGADSIATGHYARIKHYRQRWHLLRGADRSKDQSYFLHQLGQEQLAATMFPIGDLEKPQLRQLAHQAGLPTHAKKDSTGICFIGERNFREFLKQYLPAQPGEIRDPQEQRIAEHPGVFYFTLGQRQGLNIGGVRNRPPSPWYVIGKDLATNVLYVDQHRDSPFLQSRWLRSEPAHWVSGSPPAPTFTCTAQTRYRQADEPCKVTVRNDGSLDVDFTQTQWAVTPGQSLVLYDGNECLGGAVIATTDAPLERKRARNLSKTENVLQ</sequence>
<name>MNMA_XYLFA</name>